<feature type="chain" id="PRO_0000460573" description="Minor capsid protein P7">
    <location>
        <begin position="1"/>
        <end position="256"/>
    </location>
</feature>
<feature type="region of interest" description="Hydrophobic" evidence="3">
    <location>
        <begin position="24"/>
        <end position="44"/>
    </location>
</feature>
<feature type="region of interest" description="Hydrophobic" evidence="3">
    <location>
        <begin position="47"/>
        <end position="67"/>
    </location>
</feature>
<feature type="disulfide bond" evidence="2">
    <location>
        <begin position="120"/>
        <end position="134"/>
    </location>
</feature>
<feature type="disulfide bond" evidence="2">
    <location>
        <begin position="156"/>
        <end position="172"/>
    </location>
</feature>
<feature type="disulfide bond" evidence="2">
    <location>
        <begin position="188"/>
        <end position="211"/>
    </location>
</feature>
<protein>
    <recommendedName>
        <fullName>Minor capsid protein P7</fullName>
    </recommendedName>
</protein>
<organism evidence="5 6">
    <name type="scientific">Paramecium bursaria Chlorella virus 1</name>
    <name type="common">PBCV-1</name>
    <dbReference type="NCBI Taxonomy" id="10506"/>
    <lineage>
        <taxon>Viruses</taxon>
        <taxon>Varidnaviria</taxon>
        <taxon>Bamfordvirae</taxon>
        <taxon>Nucleocytoviricota</taxon>
        <taxon>Megaviricetes</taxon>
        <taxon>Algavirales</taxon>
        <taxon>Phycodnaviridae</taxon>
        <taxon>Chlorovirus</taxon>
    </lineage>
</organism>
<dbReference type="EMBL" id="JF411744">
    <property type="protein sequence ID" value="AAC96631.2"/>
    <property type="molecule type" value="Genomic_DNA"/>
</dbReference>
<dbReference type="RefSeq" id="NP_048617.2">
    <property type="nucleotide sequence ID" value="NC_000852.5"/>
</dbReference>
<dbReference type="PDB" id="6NCL">
    <property type="method" value="EM"/>
    <property type="resolution" value="3.50 A"/>
    <property type="chains" value="a4=1-256"/>
</dbReference>
<dbReference type="PDBsum" id="6NCL"/>
<dbReference type="EMDB" id="EMD-0436"/>
<dbReference type="SMR" id="Q84580"/>
<dbReference type="GeneID" id="918320"/>
<dbReference type="KEGG" id="vg:918320"/>
<dbReference type="OrthoDB" id="11409at10239"/>
<dbReference type="Proteomes" id="UP000000862">
    <property type="component" value="Genome"/>
</dbReference>
<dbReference type="GO" id="GO:0019028">
    <property type="term" value="C:viral capsid"/>
    <property type="evidence" value="ECO:0007669"/>
    <property type="project" value="UniProtKB-KW"/>
</dbReference>
<proteinExistence type="evidence at protein level"/>
<reference key="1">
    <citation type="journal article" date="1996" name="Virology">
        <title>Analysis of 76 kb of the chlorella virus PBCV-1 330-kb genome: map positions 182 to 258.</title>
        <authorList>
            <person name="Kutish G.F."/>
            <person name="Li Y."/>
            <person name="Lu Z."/>
            <person name="Furuta M."/>
            <person name="Rock D.L."/>
            <person name="van Etten J.L."/>
        </authorList>
    </citation>
    <scope>NUCLEOTIDE SEQUENCE [LARGE SCALE GENOMIC DNA]</scope>
</reference>
<reference key="2">
    <citation type="journal article" date="2010" name="J. Virol.">
        <title>Microarray analysis of Paramecium bursaria chlorella virus 1 transcription.</title>
        <authorList>
            <person name="Yanai-Balser G.M."/>
            <person name="Duncan G.A."/>
            <person name="Eudy J.D."/>
            <person name="Wang D."/>
            <person name="Li X."/>
            <person name="Agarkova I.V."/>
            <person name="Dunigan D.D."/>
            <person name="Van Etten J.L."/>
        </authorList>
    </citation>
    <scope>INDUCTION</scope>
</reference>
<reference evidence="7" key="3">
    <citation type="journal article" date="2019" name="Nat. Commun.">
        <title>Near-atomic structure of a giant virus.</title>
        <authorList>
            <person name="Fang Q."/>
            <person name="Zhu D."/>
            <person name="Agarkova I."/>
            <person name="Adhikari J."/>
            <person name="Klose T."/>
            <person name="Liu Y."/>
            <person name="Chen Z."/>
            <person name="Sun Y."/>
            <person name="Gross M.L."/>
            <person name="Van Etten J.L."/>
            <person name="Zhang X."/>
            <person name="Rossmann M.G."/>
        </authorList>
    </citation>
    <scope>STRUCTURE BY ELECTRON MICROSCOPY (3.50 ANGSTROMS)</scope>
    <scope>DISULFIDE BONDS</scope>
    <scope>FUNCTION</scope>
    <scope>SUBCELLULAR LOCATION</scope>
    <scope>INTERACTION WITH THE MAJOR CAPSID PROTEIN</scope>
</reference>
<organismHost>
    <name type="scientific">Chlorella</name>
    <dbReference type="NCBI Taxonomy" id="3071"/>
</organismHost>
<evidence type="ECO:0000269" key="1">
    <source>
    </source>
</evidence>
<evidence type="ECO:0000269" key="2">
    <source>
    </source>
</evidence>
<evidence type="ECO:0000305" key="3"/>
<evidence type="ECO:0000305" key="4">
    <source>
    </source>
</evidence>
<evidence type="ECO:0000312" key="5">
    <source>
        <dbReference type="EMBL" id="AAC96631.2"/>
    </source>
</evidence>
<evidence type="ECO:0000312" key="6">
    <source>
        <dbReference type="Proteomes" id="UP000000862"/>
    </source>
</evidence>
<evidence type="ECO:0007744" key="7">
    <source>
        <dbReference type="PDB" id="6NCL"/>
    </source>
</evidence>
<accession>Q84580</accession>
<keyword id="KW-0002">3D-structure</keyword>
<keyword id="KW-0167">Capsid protein</keyword>
<keyword id="KW-1015">Disulfide bond</keyword>
<keyword id="KW-0426">Late protein</keyword>
<keyword id="KW-1185">Reference proteome</keyword>
<keyword id="KW-0946">Virion</keyword>
<sequence>MQIYSEYYEKIGPRKLRLLVKRRLLFASTWLYINNYILLSIIMKLQTKHMILLGFVAVVVVFIIFMLTRKKKEGFSIGNIFGKVKGAVTGTVGKVVNVVKPQGYKPEFVNRVNFGKFWACPEGTTDWGSEDKQCLVSQYGPMMWRNKGGNEWGWSCPAGSAPNNSDDWNQKCVQGYSMKKLIDGQWRCTDTEIDTGKDWSNSDWFTAQQQCDRGNNKVFTRRMYIDGKWQCPDGTWDTGFTWSDGENGGKQCKYYP</sequence>
<gene>
    <name evidence="5" type="primary">A262/263L</name>
</gene>
<comment type="function">
    <text evidence="2">One of the minor capsid proteins that constitute a network internal to the major capsid proteins and outside the lipid membrane (PubMed:30674888). The minor capsid proteins glue and stabilize the capsomers (PubMed:30674888).</text>
</comment>
<comment type="subunit">
    <text evidence="2">Interacts with the major capsid protein.</text>
</comment>
<comment type="subcellular location">
    <subcellularLocation>
        <location evidence="2">Virion</location>
    </subcellularLocation>
</comment>
<comment type="induction">
    <text evidence="1">Expressed in the late phase of the viral replicative cycle.</text>
</comment>
<comment type="domain">
    <text evidence="4">The hydrophobic regions might anchor the protein in the underlying inner membrane.</text>
</comment>
<comment type="PTM">
    <text evidence="2">Stabilized by 3 intramolecular disulfide bonds.</text>
</comment>
<name>P7_PBCV1</name>